<organism>
    <name type="scientific">Caldicellulosiruptor saccharolyticus (strain ATCC 43494 / DSM 8903 / Tp8T 6331)</name>
    <dbReference type="NCBI Taxonomy" id="351627"/>
    <lineage>
        <taxon>Bacteria</taxon>
        <taxon>Bacillati</taxon>
        <taxon>Bacillota</taxon>
        <taxon>Bacillota incertae sedis</taxon>
        <taxon>Caldicellulosiruptorales</taxon>
        <taxon>Caldicellulosiruptoraceae</taxon>
        <taxon>Caldicellulosiruptor</taxon>
    </lineage>
</organism>
<comment type="catalytic activity">
    <reaction evidence="1">
        <text>(2R)-O-phospho-3-sulfolactate + H2O = (2R)-3-sulfolactate + phosphate</text>
        <dbReference type="Rhea" id="RHEA:23416"/>
        <dbReference type="ChEBI" id="CHEBI:15377"/>
        <dbReference type="ChEBI" id="CHEBI:15597"/>
        <dbReference type="ChEBI" id="CHEBI:43474"/>
        <dbReference type="ChEBI" id="CHEBI:58738"/>
        <dbReference type="EC" id="3.1.3.71"/>
    </reaction>
</comment>
<comment type="cofactor">
    <cofactor evidence="1">
        <name>Mg(2+)</name>
        <dbReference type="ChEBI" id="CHEBI:18420"/>
    </cofactor>
</comment>
<comment type="similarity">
    <text evidence="1">Belongs to the ComB family.</text>
</comment>
<name>COMB_CALS8</name>
<proteinExistence type="inferred from homology"/>
<dbReference type="EC" id="3.1.3.71" evidence="1"/>
<dbReference type="EMBL" id="CP000679">
    <property type="protein sequence ID" value="ABP65831.1"/>
    <property type="molecule type" value="Genomic_DNA"/>
</dbReference>
<dbReference type="RefSeq" id="WP_011915796.1">
    <property type="nucleotide sequence ID" value="NC_009437.1"/>
</dbReference>
<dbReference type="SMR" id="A4XFZ6"/>
<dbReference type="STRING" id="351627.Csac_0183"/>
<dbReference type="KEGG" id="csc:Csac_0183"/>
<dbReference type="eggNOG" id="COG2045">
    <property type="taxonomic scope" value="Bacteria"/>
</dbReference>
<dbReference type="HOGENOM" id="CLU_070028_0_1_9"/>
<dbReference type="OrthoDB" id="4913at2"/>
<dbReference type="Proteomes" id="UP000000256">
    <property type="component" value="Chromosome"/>
</dbReference>
<dbReference type="GO" id="GO:0050532">
    <property type="term" value="F:2-phosphosulfolactate phosphatase activity"/>
    <property type="evidence" value="ECO:0007669"/>
    <property type="project" value="UniProtKB-UniRule"/>
</dbReference>
<dbReference type="GO" id="GO:0000287">
    <property type="term" value="F:magnesium ion binding"/>
    <property type="evidence" value="ECO:0007669"/>
    <property type="project" value="UniProtKB-UniRule"/>
</dbReference>
<dbReference type="GO" id="GO:0050545">
    <property type="term" value="F:sulfopyruvate decarboxylase activity"/>
    <property type="evidence" value="ECO:0007669"/>
    <property type="project" value="TreeGrafter"/>
</dbReference>
<dbReference type="FunFam" id="3.90.1560.10:FF:000001">
    <property type="entry name" value="Probable 2-phosphosulfolactate phosphatase"/>
    <property type="match status" value="1"/>
</dbReference>
<dbReference type="Gene3D" id="3.90.1560.10">
    <property type="entry name" value="ComB-like"/>
    <property type="match status" value="1"/>
</dbReference>
<dbReference type="HAMAP" id="MF_00490">
    <property type="entry name" value="ComB"/>
    <property type="match status" value="1"/>
</dbReference>
<dbReference type="InterPro" id="IPR005238">
    <property type="entry name" value="ComB-like"/>
</dbReference>
<dbReference type="InterPro" id="IPR036702">
    <property type="entry name" value="ComB-like_sf"/>
</dbReference>
<dbReference type="NCBIfam" id="NF002054">
    <property type="entry name" value="PRK00886.1-3"/>
    <property type="match status" value="1"/>
</dbReference>
<dbReference type="PANTHER" id="PTHR37311">
    <property type="entry name" value="2-PHOSPHOSULFOLACTATE PHOSPHATASE-RELATED"/>
    <property type="match status" value="1"/>
</dbReference>
<dbReference type="PANTHER" id="PTHR37311:SF1">
    <property type="entry name" value="2-PHOSPHOSULFOLACTATE PHOSPHATASE-RELATED"/>
    <property type="match status" value="1"/>
</dbReference>
<dbReference type="Pfam" id="PF04029">
    <property type="entry name" value="2-ph_phosp"/>
    <property type="match status" value="1"/>
</dbReference>
<dbReference type="SUPFAM" id="SSF142823">
    <property type="entry name" value="ComB-like"/>
    <property type="match status" value="1"/>
</dbReference>
<accession>A4XFZ6</accession>
<gene>
    <name evidence="1" type="primary">comB</name>
    <name type="ordered locus">Csac_0183</name>
</gene>
<reference key="1">
    <citation type="submission" date="2007-04" db="EMBL/GenBank/DDBJ databases">
        <title>Genome sequence of the thermophilic hydrogen-producing bacterium Caldicellulosiruptor saccharolyticus DSM 8903.</title>
        <authorList>
            <person name="Copeland A."/>
            <person name="Lucas S."/>
            <person name="Lapidus A."/>
            <person name="Barry K."/>
            <person name="Detter J.C."/>
            <person name="Glavina del Rio T."/>
            <person name="Hammon N."/>
            <person name="Israni S."/>
            <person name="Dalin E."/>
            <person name="Tice H."/>
            <person name="Pitluck S."/>
            <person name="Kiss H."/>
            <person name="Brettin T."/>
            <person name="Bruce D."/>
            <person name="Han C."/>
            <person name="Schmutz J."/>
            <person name="Larimer F."/>
            <person name="Land M."/>
            <person name="Hauser L."/>
            <person name="Kyrpides N."/>
            <person name="Lykidis A."/>
            <person name="van de Werken H.J.G."/>
            <person name="Verhaart M.R.A."/>
            <person name="VanFossen A.L."/>
            <person name="Lewis D.L."/>
            <person name="Nichols J.D."/>
            <person name="Goorissen H.P."/>
            <person name="van Niel E.W.J."/>
            <person name="Stams F.J.M."/>
            <person name="Willquist K.U."/>
            <person name="Ward D.E."/>
            <person name="van der Oost J."/>
            <person name="Kelly R.M."/>
            <person name="Kengen S.M.W."/>
            <person name="Richardson P."/>
        </authorList>
    </citation>
    <scope>NUCLEOTIDE SEQUENCE [LARGE SCALE GENOMIC DNA]</scope>
    <source>
        <strain>ATCC 43494 / DSM 8903 / Tp8T 6331</strain>
    </source>
</reference>
<feature type="chain" id="PRO_1000081391" description="Probable 2-phosphosulfolactate phosphatase">
    <location>
        <begin position="1"/>
        <end position="242"/>
    </location>
</feature>
<keyword id="KW-0378">Hydrolase</keyword>
<keyword id="KW-0460">Magnesium</keyword>
<sequence>MKIITFSHYKEVTDDVLKDSYAVVIDLLRATSTMIWAISNGAKGIIPVEDISEARLLKRLDESVLLGGERGGLKIEGFDLDNSPLSYKKEAIFGKTVVMTTTNGTRALKKASCAKRIFLGSFINAKKTAEYIMKETLHYNIDTISIVCAGTEEKFTLEDILCAGYFVDLFIENFPDVFLDDLSLASHVLYKKFENDPHEILKYSYHYNHLKKLGFEADLEFCLRKDFVDCVCEFRNLVVEKV</sequence>
<evidence type="ECO:0000255" key="1">
    <source>
        <dbReference type="HAMAP-Rule" id="MF_00490"/>
    </source>
</evidence>
<protein>
    <recommendedName>
        <fullName evidence="1">Probable 2-phosphosulfolactate phosphatase</fullName>
        <ecNumber evidence="1">3.1.3.71</ecNumber>
    </recommendedName>
</protein>